<organism>
    <name type="scientific">Shigella flexneri</name>
    <dbReference type="NCBI Taxonomy" id="623"/>
    <lineage>
        <taxon>Bacteria</taxon>
        <taxon>Pseudomonadati</taxon>
        <taxon>Pseudomonadota</taxon>
        <taxon>Gammaproteobacteria</taxon>
        <taxon>Enterobacterales</taxon>
        <taxon>Enterobacteriaceae</taxon>
        <taxon>Shigella</taxon>
    </lineage>
</organism>
<accession>Q83S86</accession>
<sequence>MKIDLNADLGEGCASDAELLTLVSSANIACGFHAGDAQTMQACVREAIKNGVAIGAHPSFPDRENFGRSAMQLPPETVYAQTLYQIGALATIARAQGGVMRHVKPHGMLYNQAAKEAQLADAIARAVYACDPALVLVGLAGSELIRAGKQYGLTTREEVFADRGYQADGSLVPRSQPGALIENEEQALAQTLEMVQHGRVKSITGEWATVAAQTVCLHGDGEHALAFARRLRATFAKKGIVVAA</sequence>
<feature type="chain" id="PRO_0000185041" description="5-oxoprolinase subunit A">
    <location>
        <begin position="1"/>
        <end position="244"/>
    </location>
</feature>
<feature type="sequence conflict" description="In Ref. 2; AAP16100." evidence="2" ref="2">
    <original>C</original>
    <variation>F</variation>
    <location>
        <position position="43"/>
    </location>
</feature>
<comment type="function">
    <text evidence="1">Catalyzes the cleavage of 5-oxoproline to form L-glutamate coupled to the hydrolysis of ATP to ADP and inorganic phosphate.</text>
</comment>
<comment type="catalytic activity">
    <reaction evidence="1">
        <text>5-oxo-L-proline + ATP + 2 H2O = L-glutamate + ADP + phosphate + H(+)</text>
        <dbReference type="Rhea" id="RHEA:10348"/>
        <dbReference type="ChEBI" id="CHEBI:15377"/>
        <dbReference type="ChEBI" id="CHEBI:15378"/>
        <dbReference type="ChEBI" id="CHEBI:29985"/>
        <dbReference type="ChEBI" id="CHEBI:30616"/>
        <dbReference type="ChEBI" id="CHEBI:43474"/>
        <dbReference type="ChEBI" id="CHEBI:58402"/>
        <dbReference type="ChEBI" id="CHEBI:456216"/>
        <dbReference type="EC" id="3.5.2.9"/>
    </reaction>
</comment>
<comment type="subunit">
    <text evidence="1">Forms a complex composed of PxpA, PxpB and PxpC.</text>
</comment>
<comment type="similarity">
    <text evidence="1">Belongs to the LamB/PxpA family.</text>
</comment>
<dbReference type="EC" id="3.5.2.9" evidence="1"/>
<dbReference type="EMBL" id="AE005674">
    <property type="protein sequence ID" value="AAN42227.1"/>
    <property type="molecule type" value="Genomic_DNA"/>
</dbReference>
<dbReference type="EMBL" id="AE014073">
    <property type="protein sequence ID" value="AAP16100.1"/>
    <property type="molecule type" value="Genomic_DNA"/>
</dbReference>
<dbReference type="RefSeq" id="NP_706520.1">
    <property type="nucleotide sequence ID" value="NC_004337.2"/>
</dbReference>
<dbReference type="RefSeq" id="WP_000687141.1">
    <property type="nucleotide sequence ID" value="NZ_WPGW01000035.1"/>
</dbReference>
<dbReference type="SMR" id="Q83S86"/>
<dbReference type="STRING" id="198214.SF0584"/>
<dbReference type="PaxDb" id="198214-SF0584"/>
<dbReference type="GeneID" id="1023575"/>
<dbReference type="KEGG" id="sfl:SF0584"/>
<dbReference type="KEGG" id="sfx:S0597"/>
<dbReference type="PATRIC" id="fig|198214.7.peg.678"/>
<dbReference type="HOGENOM" id="CLU_069535_0_0_6"/>
<dbReference type="Proteomes" id="UP000001006">
    <property type="component" value="Chromosome"/>
</dbReference>
<dbReference type="Proteomes" id="UP000002673">
    <property type="component" value="Chromosome"/>
</dbReference>
<dbReference type="GO" id="GO:0017168">
    <property type="term" value="F:5-oxoprolinase (ATP-hydrolyzing) activity"/>
    <property type="evidence" value="ECO:0007669"/>
    <property type="project" value="UniProtKB-UniRule"/>
</dbReference>
<dbReference type="GO" id="GO:0005524">
    <property type="term" value="F:ATP binding"/>
    <property type="evidence" value="ECO:0007669"/>
    <property type="project" value="UniProtKB-UniRule"/>
</dbReference>
<dbReference type="GO" id="GO:0005975">
    <property type="term" value="P:carbohydrate metabolic process"/>
    <property type="evidence" value="ECO:0007669"/>
    <property type="project" value="InterPro"/>
</dbReference>
<dbReference type="CDD" id="cd10800">
    <property type="entry name" value="LamB_YcsF_YbgL_like"/>
    <property type="match status" value="1"/>
</dbReference>
<dbReference type="Gene3D" id="3.20.20.370">
    <property type="entry name" value="Glycoside hydrolase/deacetylase"/>
    <property type="match status" value="1"/>
</dbReference>
<dbReference type="HAMAP" id="MF_00691">
    <property type="entry name" value="PxpA"/>
    <property type="match status" value="1"/>
</dbReference>
<dbReference type="InterPro" id="IPR011330">
    <property type="entry name" value="Glyco_hydro/deAcase_b/a-brl"/>
</dbReference>
<dbReference type="InterPro" id="IPR005501">
    <property type="entry name" value="LamB/YcsF/PxpA-like"/>
</dbReference>
<dbReference type="NCBIfam" id="NF003812">
    <property type="entry name" value="PRK05406.1-1"/>
    <property type="match status" value="1"/>
</dbReference>
<dbReference type="NCBIfam" id="NF003814">
    <property type="entry name" value="PRK05406.1-3"/>
    <property type="match status" value="1"/>
</dbReference>
<dbReference type="NCBIfam" id="NF003815">
    <property type="entry name" value="PRK05406.1-4"/>
    <property type="match status" value="1"/>
</dbReference>
<dbReference type="NCBIfam" id="NF003816">
    <property type="entry name" value="PRK05406.1-5"/>
    <property type="match status" value="1"/>
</dbReference>
<dbReference type="PANTHER" id="PTHR30292:SF0">
    <property type="entry name" value="5-OXOPROLINASE SUBUNIT A"/>
    <property type="match status" value="1"/>
</dbReference>
<dbReference type="PANTHER" id="PTHR30292">
    <property type="entry name" value="UNCHARACTERIZED PROTEIN YBGL-RELATED"/>
    <property type="match status" value="1"/>
</dbReference>
<dbReference type="Pfam" id="PF03746">
    <property type="entry name" value="LamB_YcsF"/>
    <property type="match status" value="1"/>
</dbReference>
<dbReference type="SUPFAM" id="SSF88713">
    <property type="entry name" value="Glycoside hydrolase/deacetylase"/>
    <property type="match status" value="1"/>
</dbReference>
<name>PXPA_SHIFL</name>
<proteinExistence type="inferred from homology"/>
<gene>
    <name evidence="1" type="primary">pxpA</name>
    <name type="synonym">ybgL</name>
    <name type="ordered locus">SF0584</name>
    <name type="ordered locus">S0597</name>
</gene>
<keyword id="KW-0067">ATP-binding</keyword>
<keyword id="KW-0378">Hydrolase</keyword>
<keyword id="KW-0547">Nucleotide-binding</keyword>
<keyword id="KW-1185">Reference proteome</keyword>
<evidence type="ECO:0000255" key="1">
    <source>
        <dbReference type="HAMAP-Rule" id="MF_00691"/>
    </source>
</evidence>
<evidence type="ECO:0000305" key="2"/>
<protein>
    <recommendedName>
        <fullName evidence="1">5-oxoprolinase subunit A</fullName>
        <shortName evidence="1">5-OPase subunit A</shortName>
        <ecNumber evidence="1">3.5.2.9</ecNumber>
    </recommendedName>
    <alternativeName>
        <fullName evidence="1">5-oxoprolinase (ATP-hydrolyzing) subunit A</fullName>
    </alternativeName>
</protein>
<reference key="1">
    <citation type="journal article" date="2002" name="Nucleic Acids Res.">
        <title>Genome sequence of Shigella flexneri 2a: insights into pathogenicity through comparison with genomes of Escherichia coli K12 and O157.</title>
        <authorList>
            <person name="Jin Q."/>
            <person name="Yuan Z."/>
            <person name="Xu J."/>
            <person name="Wang Y."/>
            <person name="Shen Y."/>
            <person name="Lu W."/>
            <person name="Wang J."/>
            <person name="Liu H."/>
            <person name="Yang J."/>
            <person name="Yang F."/>
            <person name="Zhang X."/>
            <person name="Zhang J."/>
            <person name="Yang G."/>
            <person name="Wu H."/>
            <person name="Qu D."/>
            <person name="Dong J."/>
            <person name="Sun L."/>
            <person name="Xue Y."/>
            <person name="Zhao A."/>
            <person name="Gao Y."/>
            <person name="Zhu J."/>
            <person name="Kan B."/>
            <person name="Ding K."/>
            <person name="Chen S."/>
            <person name="Cheng H."/>
            <person name="Yao Z."/>
            <person name="He B."/>
            <person name="Chen R."/>
            <person name="Ma D."/>
            <person name="Qiang B."/>
            <person name="Wen Y."/>
            <person name="Hou Y."/>
            <person name="Yu J."/>
        </authorList>
    </citation>
    <scope>NUCLEOTIDE SEQUENCE [LARGE SCALE GENOMIC DNA]</scope>
    <source>
        <strain>301 / Serotype 2a</strain>
    </source>
</reference>
<reference key="2">
    <citation type="journal article" date="2003" name="Infect. Immun.">
        <title>Complete genome sequence and comparative genomics of Shigella flexneri serotype 2a strain 2457T.</title>
        <authorList>
            <person name="Wei J."/>
            <person name="Goldberg M.B."/>
            <person name="Burland V."/>
            <person name="Venkatesan M.M."/>
            <person name="Deng W."/>
            <person name="Fournier G."/>
            <person name="Mayhew G.F."/>
            <person name="Plunkett G. III"/>
            <person name="Rose D.J."/>
            <person name="Darling A."/>
            <person name="Mau B."/>
            <person name="Perna N.T."/>
            <person name="Payne S.M."/>
            <person name="Runyen-Janecky L.J."/>
            <person name="Zhou S."/>
            <person name="Schwartz D.C."/>
            <person name="Blattner F.R."/>
        </authorList>
    </citation>
    <scope>NUCLEOTIDE SEQUENCE [LARGE SCALE GENOMIC DNA]</scope>
    <source>
        <strain>ATCC 700930 / 2457T / Serotype 2a</strain>
    </source>
</reference>